<proteinExistence type="evidence at protein level"/>
<accession>A0ZSF4</accession>
<sequence>QSPINIVSYDAKFRQRLPKLKFKPHMEKLKTEVTNHQNRAPEFEPEDGENLYVKLNNLVDGHYKFHNLHVHNGRTRRKGSEHSVNGRFTPMEAHLVFHHDDQTHFEPTRTKLGGAFPGHNDFVVVGVFLEVGDDGFGDEPDDEECKRILKGHHPDNNENGNGDNGNNGYNGDNGNNGDNGNNGYNGDNGNNGDNGNNGYNGDNGNNGDNGNNGENGNNGENGNNGENGNNGENGHKHGCRVKKAKHLSTILECAYRNDKVREFKKVGEEEGLDVHLTPEMPLPPLKNRHYYTYEGSLTTPPCTESVLWVVQKCHVQVSRRVLHALRNVEGY</sequence>
<keyword id="KW-0106">Calcium</keyword>
<keyword id="KW-1015">Disulfide bond</keyword>
<keyword id="KW-0272">Extracellular matrix</keyword>
<keyword id="KW-0456">Lyase</keyword>
<keyword id="KW-0479">Metal-binding</keyword>
<keyword id="KW-0677">Repeat</keyword>
<keyword id="KW-0964">Secreted</keyword>
<keyword id="KW-0862">Zinc</keyword>
<dbReference type="EC" id="4.2.1.1"/>
<dbReference type="EMBL" id="AB252481">
    <property type="protein sequence ID" value="BAF42331.1"/>
    <property type="molecule type" value="mRNA"/>
</dbReference>
<dbReference type="SMR" id="A0ZSF4"/>
<dbReference type="GO" id="GO:0005737">
    <property type="term" value="C:cytoplasm"/>
    <property type="evidence" value="ECO:0007669"/>
    <property type="project" value="TreeGrafter"/>
</dbReference>
<dbReference type="GO" id="GO:0005576">
    <property type="term" value="C:extracellular region"/>
    <property type="evidence" value="ECO:0007669"/>
    <property type="project" value="UniProtKB-KW"/>
</dbReference>
<dbReference type="GO" id="GO:0004089">
    <property type="term" value="F:carbonate dehydratase activity"/>
    <property type="evidence" value="ECO:0007669"/>
    <property type="project" value="UniProtKB-EC"/>
</dbReference>
<dbReference type="GO" id="GO:0008270">
    <property type="term" value="F:zinc ion binding"/>
    <property type="evidence" value="ECO:0007669"/>
    <property type="project" value="InterPro"/>
</dbReference>
<dbReference type="CDD" id="cd00326">
    <property type="entry name" value="alpha_CA"/>
    <property type="match status" value="1"/>
</dbReference>
<dbReference type="Gene3D" id="3.10.200.10">
    <property type="entry name" value="Alpha carbonic anhydrase"/>
    <property type="match status" value="2"/>
</dbReference>
<dbReference type="InterPro" id="IPR001148">
    <property type="entry name" value="CA_dom"/>
</dbReference>
<dbReference type="InterPro" id="IPR036398">
    <property type="entry name" value="CA_dom_sf"/>
</dbReference>
<dbReference type="InterPro" id="IPR023561">
    <property type="entry name" value="Carbonic_anhydrase_a-class"/>
</dbReference>
<dbReference type="InterPro" id="IPR008160">
    <property type="entry name" value="Collagen"/>
</dbReference>
<dbReference type="PANTHER" id="PTHR18952">
    <property type="entry name" value="CARBONIC ANHYDRASE"/>
    <property type="match status" value="1"/>
</dbReference>
<dbReference type="PANTHER" id="PTHR18952:SF141">
    <property type="entry name" value="CARBONIC ANHYDRASE"/>
    <property type="match status" value="1"/>
</dbReference>
<dbReference type="Pfam" id="PF00194">
    <property type="entry name" value="Carb_anhydrase"/>
    <property type="match status" value="2"/>
</dbReference>
<dbReference type="Pfam" id="PF01391">
    <property type="entry name" value="Collagen"/>
    <property type="match status" value="2"/>
</dbReference>
<dbReference type="SMART" id="SM01057">
    <property type="entry name" value="Carb_anhydrase"/>
    <property type="match status" value="1"/>
</dbReference>
<dbReference type="SUPFAM" id="SSF51069">
    <property type="entry name" value="Carbonic anhydrase"/>
    <property type="match status" value="1"/>
</dbReference>
<dbReference type="PROSITE" id="PS51144">
    <property type="entry name" value="ALPHA_CA_2"/>
    <property type="match status" value="1"/>
</dbReference>
<comment type="function">
    <text evidence="1 4">Acts as a negative regulator for calcification in the shells of mollusks. May function both as a calcium concentrator and as a carbonic anhydrase required for production of carbonate ions, which are assembled to CaCO(3) at mineralization sites. Is important for shell formation in both the calcitic prismatic layer and the aragonitic nacreous layer (By similarity). Shows inhibitory activity of crystal formation when present in free state but, when attached to the insoluble matrix, may regulate the form and size of aragonite crystal.</text>
</comment>
<comment type="catalytic activity">
    <reaction>
        <text>hydrogencarbonate + H(+) = CO2 + H2O</text>
        <dbReference type="Rhea" id="RHEA:10748"/>
        <dbReference type="ChEBI" id="CHEBI:15377"/>
        <dbReference type="ChEBI" id="CHEBI:15378"/>
        <dbReference type="ChEBI" id="CHEBI:16526"/>
        <dbReference type="ChEBI" id="CHEBI:17544"/>
        <dbReference type="EC" id="4.2.1.1"/>
    </reaction>
</comment>
<comment type="cofactor">
    <cofactor evidence="1">
        <name>Zn(2+)</name>
        <dbReference type="ChEBI" id="CHEBI:29105"/>
    </cofactor>
</comment>
<comment type="subunit">
    <text evidence="1">Homooligomer; disulfide-linked. May also be disulfide-linked to insoluble organic matrix (By similarity).</text>
</comment>
<comment type="subcellular location">
    <subcellularLocation>
        <location evidence="1">Secreted</location>
        <location evidence="1">Extracellular space</location>
        <location evidence="1">Extracellular matrix</location>
    </subcellularLocation>
</comment>
<comment type="tissue specificity">
    <text>Expressed in the mantle.</text>
</comment>
<comment type="domain">
    <text evidence="5">The Gly-Xaa-Asn repeat domain binds calcium.</text>
</comment>
<comment type="similarity">
    <text evidence="5">Belongs to the alpha-carbonic anhydrase family.</text>
</comment>
<reference key="1">
    <citation type="journal article" date="2008" name="Mar. Biotechnol.">
        <title>Distribution and function of the nacrein-related proteins inferred from structural analysis.</title>
        <authorList>
            <person name="Norizuki M."/>
            <person name="Samata T."/>
        </authorList>
    </citation>
    <scope>NUCLEOTIDE SEQUENCE [MRNA]</scope>
    <scope>FUNCTION</scope>
    <scope>CRYSTALLIZATION</scope>
    <source>
        <tissue>Gill</tissue>
        <tissue>Mantle</tissue>
    </source>
</reference>
<protein>
    <recommendedName>
        <fullName>Nacrein-like protein P1</fullName>
        <ecNumber>4.2.1.1</ecNumber>
    </recommendedName>
</protein>
<feature type="chain" id="PRO_0000379793" description="Nacrein-like protein P1">
    <location>
        <begin position="1" status="less than"/>
        <end position="331" status="greater than"/>
    </location>
</feature>
<feature type="domain" description="Alpha-carbonic anhydrase" evidence="2">
    <location>
        <begin position="1"/>
        <end position="331"/>
    </location>
</feature>
<feature type="repeat" description="1">
    <location>
        <begin position="162"/>
        <end position="164"/>
    </location>
</feature>
<feature type="repeat" description="2">
    <location>
        <begin position="165"/>
        <end position="167"/>
    </location>
</feature>
<feature type="repeat" description="3">
    <location>
        <begin position="168"/>
        <end position="170"/>
    </location>
</feature>
<feature type="repeat" description="4">
    <location>
        <begin position="171"/>
        <end position="173"/>
    </location>
</feature>
<feature type="repeat" description="5">
    <location>
        <begin position="174"/>
        <end position="176"/>
    </location>
</feature>
<feature type="repeat" description="6">
    <location>
        <begin position="177"/>
        <end position="179"/>
    </location>
</feature>
<feature type="repeat" description="7">
    <location>
        <begin position="180"/>
        <end position="182"/>
    </location>
</feature>
<feature type="repeat" description="8">
    <location>
        <begin position="183"/>
        <end position="185"/>
    </location>
</feature>
<feature type="repeat" description="9">
    <location>
        <begin position="186"/>
        <end position="188"/>
    </location>
</feature>
<feature type="repeat" description="10">
    <location>
        <begin position="189"/>
        <end position="191"/>
    </location>
</feature>
<feature type="repeat" description="11">
    <location>
        <begin position="192"/>
        <end position="194"/>
    </location>
</feature>
<feature type="repeat" description="12">
    <location>
        <begin position="195"/>
        <end position="197"/>
    </location>
</feature>
<feature type="repeat" description="13">
    <location>
        <begin position="198"/>
        <end position="200"/>
    </location>
</feature>
<feature type="repeat" description="14">
    <location>
        <begin position="201"/>
        <end position="203"/>
    </location>
</feature>
<feature type="repeat" description="15">
    <location>
        <begin position="204"/>
        <end position="206"/>
    </location>
</feature>
<feature type="repeat" description="16">
    <location>
        <begin position="207"/>
        <end position="209"/>
    </location>
</feature>
<feature type="repeat" description="17">
    <location>
        <begin position="210"/>
        <end position="212"/>
    </location>
</feature>
<feature type="repeat" description="18">
    <location>
        <begin position="213"/>
        <end position="215"/>
    </location>
</feature>
<feature type="repeat" description="19">
    <location>
        <begin position="216"/>
        <end position="218"/>
    </location>
</feature>
<feature type="repeat" description="20">
    <location>
        <begin position="219"/>
        <end position="221"/>
    </location>
</feature>
<feature type="repeat" description="21">
    <location>
        <begin position="222"/>
        <end position="224"/>
    </location>
</feature>
<feature type="repeat" description="22">
    <location>
        <begin position="225"/>
        <end position="227"/>
    </location>
</feature>
<feature type="repeat" description="23">
    <location>
        <begin position="228"/>
        <end position="229"/>
    </location>
</feature>
<feature type="repeat" description="24">
    <location>
        <begin position="231"/>
        <end position="233"/>
    </location>
</feature>
<feature type="region of interest" description="Disordered" evidence="3">
    <location>
        <begin position="138"/>
        <end position="240"/>
    </location>
</feature>
<feature type="region of interest" description="24 X 3 AA approximate tandem repeats of G-X-N">
    <location>
        <begin position="162"/>
        <end position="233"/>
    </location>
</feature>
<feature type="compositionally biased region" description="Basic and acidic residues" evidence="3">
    <location>
        <begin position="144"/>
        <end position="156"/>
    </location>
</feature>
<feature type="compositionally biased region" description="Low complexity" evidence="3">
    <location>
        <begin position="157"/>
        <end position="232"/>
    </location>
</feature>
<feature type="binding site" evidence="2">
    <location>
        <position position="69"/>
    </location>
    <ligand>
        <name>Zn(2+)</name>
        <dbReference type="ChEBI" id="CHEBI:29105"/>
        <note>catalytic</note>
    </ligand>
</feature>
<feature type="binding site" evidence="2">
    <location>
        <position position="71"/>
    </location>
    <ligand>
        <name>Zn(2+)</name>
        <dbReference type="ChEBI" id="CHEBI:29105"/>
        <note>catalytic</note>
    </ligand>
</feature>
<feature type="binding site" evidence="2">
    <location>
        <position position="94"/>
    </location>
    <ligand>
        <name>Zn(2+)</name>
        <dbReference type="ChEBI" id="CHEBI:29105"/>
        <note>catalytic</note>
    </ligand>
</feature>
<feature type="binding site" evidence="1">
    <location>
        <begin position="298"/>
        <end position="299"/>
    </location>
    <ligand>
        <name>substrate</name>
    </ligand>
</feature>
<feature type="non-terminal residue">
    <location>
        <position position="1"/>
    </location>
</feature>
<feature type="non-terminal residue">
    <location>
        <position position="331"/>
    </location>
</feature>
<evidence type="ECO:0000250" key="1"/>
<evidence type="ECO:0000255" key="2">
    <source>
        <dbReference type="PROSITE-ProRule" id="PRU01134"/>
    </source>
</evidence>
<evidence type="ECO:0000256" key="3">
    <source>
        <dbReference type="SAM" id="MobiDB-lite"/>
    </source>
</evidence>
<evidence type="ECO:0000269" key="4">
    <source>
    </source>
</evidence>
<evidence type="ECO:0000305" key="5"/>
<name>MAP1_MIZYE</name>
<organism>
    <name type="scientific">Mizuhopecten yessoensis</name>
    <name type="common">Japanese scallop</name>
    <name type="synonym">Patinopecten yessoensis</name>
    <dbReference type="NCBI Taxonomy" id="6573"/>
    <lineage>
        <taxon>Eukaryota</taxon>
        <taxon>Metazoa</taxon>
        <taxon>Spiralia</taxon>
        <taxon>Lophotrochozoa</taxon>
        <taxon>Mollusca</taxon>
        <taxon>Bivalvia</taxon>
        <taxon>Autobranchia</taxon>
        <taxon>Pteriomorphia</taxon>
        <taxon>Pectinida</taxon>
        <taxon>Pectinoidea</taxon>
        <taxon>Pectinidae</taxon>
        <taxon>Mizuhopecten</taxon>
    </lineage>
</organism>